<feature type="chain" id="PRO_0000294672" description="ATP-dependent RNA helicase DBP9">
    <location>
        <begin position="1"/>
        <end position="586"/>
    </location>
</feature>
<feature type="domain" description="Helicase ATP-binding" evidence="2">
    <location>
        <begin position="67"/>
        <end position="245"/>
    </location>
</feature>
<feature type="domain" description="Helicase C-terminal" evidence="3">
    <location>
        <begin position="274"/>
        <end position="467"/>
    </location>
</feature>
<feature type="region of interest" description="Disordered" evidence="4">
    <location>
        <begin position="344"/>
        <end position="372"/>
    </location>
</feature>
<feature type="region of interest" description="Disordered" evidence="4">
    <location>
        <begin position="562"/>
        <end position="586"/>
    </location>
</feature>
<feature type="short sequence motif" description="Q motif">
    <location>
        <begin position="35"/>
        <end position="63"/>
    </location>
</feature>
<feature type="short sequence motif" description="DEAD box">
    <location>
        <begin position="191"/>
        <end position="194"/>
    </location>
</feature>
<feature type="compositionally biased region" description="Acidic residues" evidence="4">
    <location>
        <begin position="344"/>
        <end position="356"/>
    </location>
</feature>
<feature type="compositionally biased region" description="Basic residues" evidence="4">
    <location>
        <begin position="562"/>
        <end position="573"/>
    </location>
</feature>
<feature type="binding site" evidence="2">
    <location>
        <begin position="80"/>
        <end position="87"/>
    </location>
    <ligand>
        <name>ATP</name>
        <dbReference type="ChEBI" id="CHEBI:30616"/>
    </ligand>
</feature>
<name>DBP9_PICGU</name>
<accession>A5DC85</accession>
<keyword id="KW-0067">ATP-binding</keyword>
<keyword id="KW-0347">Helicase</keyword>
<keyword id="KW-0378">Hydrolase</keyword>
<keyword id="KW-0547">Nucleotide-binding</keyword>
<keyword id="KW-0539">Nucleus</keyword>
<keyword id="KW-1185">Reference proteome</keyword>
<keyword id="KW-0690">Ribosome biogenesis</keyword>
<keyword id="KW-0694">RNA-binding</keyword>
<keyword id="KW-0698">rRNA processing</keyword>
<dbReference type="EC" id="3.6.4.13"/>
<dbReference type="EMBL" id="CH408155">
    <property type="protein sequence ID" value="EDK36792.2"/>
    <property type="molecule type" value="Genomic_DNA"/>
</dbReference>
<dbReference type="RefSeq" id="XP_001487513.1">
    <property type="nucleotide sequence ID" value="XM_001487463.1"/>
</dbReference>
<dbReference type="SMR" id="A5DC85"/>
<dbReference type="FunCoup" id="A5DC85">
    <property type="interactions" value="984"/>
</dbReference>
<dbReference type="STRING" id="294746.A5DC85"/>
<dbReference type="GeneID" id="5128659"/>
<dbReference type="KEGG" id="pgu:PGUG_00890"/>
<dbReference type="VEuPathDB" id="FungiDB:PGUG_00890"/>
<dbReference type="eggNOG" id="KOG0346">
    <property type="taxonomic scope" value="Eukaryota"/>
</dbReference>
<dbReference type="HOGENOM" id="CLU_003041_17_1_1"/>
<dbReference type="InParanoid" id="A5DC85"/>
<dbReference type="OMA" id="NASEQCV"/>
<dbReference type="OrthoDB" id="1191041at2759"/>
<dbReference type="Proteomes" id="UP000001997">
    <property type="component" value="Unassembled WGS sequence"/>
</dbReference>
<dbReference type="GO" id="GO:0005829">
    <property type="term" value="C:cytosol"/>
    <property type="evidence" value="ECO:0007669"/>
    <property type="project" value="TreeGrafter"/>
</dbReference>
<dbReference type="GO" id="GO:0005730">
    <property type="term" value="C:nucleolus"/>
    <property type="evidence" value="ECO:0007669"/>
    <property type="project" value="UniProtKB-SubCell"/>
</dbReference>
<dbReference type="GO" id="GO:0005524">
    <property type="term" value="F:ATP binding"/>
    <property type="evidence" value="ECO:0007669"/>
    <property type="project" value="UniProtKB-KW"/>
</dbReference>
<dbReference type="GO" id="GO:0016887">
    <property type="term" value="F:ATP hydrolysis activity"/>
    <property type="evidence" value="ECO:0007669"/>
    <property type="project" value="RHEA"/>
</dbReference>
<dbReference type="GO" id="GO:0003678">
    <property type="term" value="F:DNA helicase activity"/>
    <property type="evidence" value="ECO:0007669"/>
    <property type="project" value="EnsemblFungi"/>
</dbReference>
<dbReference type="GO" id="GO:0033677">
    <property type="term" value="F:DNA/RNA helicase activity"/>
    <property type="evidence" value="ECO:0007669"/>
    <property type="project" value="EnsemblFungi"/>
</dbReference>
<dbReference type="GO" id="GO:0003723">
    <property type="term" value="F:RNA binding"/>
    <property type="evidence" value="ECO:0007669"/>
    <property type="project" value="UniProtKB-KW"/>
</dbReference>
<dbReference type="GO" id="GO:0003724">
    <property type="term" value="F:RNA helicase activity"/>
    <property type="evidence" value="ECO:0007669"/>
    <property type="project" value="UniProtKB-EC"/>
</dbReference>
<dbReference type="GO" id="GO:0000463">
    <property type="term" value="P:maturation of LSU-rRNA from tricistronic rRNA transcript (SSU-rRNA, 5.8S rRNA, LSU-rRNA)"/>
    <property type="evidence" value="ECO:0007669"/>
    <property type="project" value="EnsemblFungi"/>
</dbReference>
<dbReference type="CDD" id="cd17961">
    <property type="entry name" value="DEADc_DDX56"/>
    <property type="match status" value="1"/>
</dbReference>
<dbReference type="CDD" id="cd18787">
    <property type="entry name" value="SF2_C_DEAD"/>
    <property type="match status" value="1"/>
</dbReference>
<dbReference type="Gene3D" id="3.40.50.300">
    <property type="entry name" value="P-loop containing nucleotide triphosphate hydrolases"/>
    <property type="match status" value="2"/>
</dbReference>
<dbReference type="InterPro" id="IPR011545">
    <property type="entry name" value="DEAD/DEAH_box_helicase_dom"/>
</dbReference>
<dbReference type="InterPro" id="IPR050079">
    <property type="entry name" value="DEAD_box_RNA_helicase"/>
</dbReference>
<dbReference type="InterPro" id="IPR014001">
    <property type="entry name" value="Helicase_ATP-bd"/>
</dbReference>
<dbReference type="InterPro" id="IPR001650">
    <property type="entry name" value="Helicase_C-like"/>
</dbReference>
<dbReference type="InterPro" id="IPR027417">
    <property type="entry name" value="P-loop_NTPase"/>
</dbReference>
<dbReference type="InterPro" id="IPR014014">
    <property type="entry name" value="RNA_helicase_DEAD_Q_motif"/>
</dbReference>
<dbReference type="PANTHER" id="PTHR47959">
    <property type="entry name" value="ATP-DEPENDENT RNA HELICASE RHLE-RELATED"/>
    <property type="match status" value="1"/>
</dbReference>
<dbReference type="PANTHER" id="PTHR47959:SF21">
    <property type="entry name" value="DEAD-BOX HELICASE 56"/>
    <property type="match status" value="1"/>
</dbReference>
<dbReference type="Pfam" id="PF00270">
    <property type="entry name" value="DEAD"/>
    <property type="match status" value="1"/>
</dbReference>
<dbReference type="Pfam" id="PF00271">
    <property type="entry name" value="Helicase_C"/>
    <property type="match status" value="2"/>
</dbReference>
<dbReference type="SMART" id="SM00487">
    <property type="entry name" value="DEXDc"/>
    <property type="match status" value="1"/>
</dbReference>
<dbReference type="SMART" id="SM00490">
    <property type="entry name" value="HELICc"/>
    <property type="match status" value="1"/>
</dbReference>
<dbReference type="SUPFAM" id="SSF52540">
    <property type="entry name" value="P-loop containing nucleoside triphosphate hydrolases"/>
    <property type="match status" value="2"/>
</dbReference>
<dbReference type="PROSITE" id="PS51192">
    <property type="entry name" value="HELICASE_ATP_BIND_1"/>
    <property type="match status" value="1"/>
</dbReference>
<dbReference type="PROSITE" id="PS51194">
    <property type="entry name" value="HELICASE_CTER"/>
    <property type="match status" value="1"/>
</dbReference>
<dbReference type="PROSITE" id="PS51195">
    <property type="entry name" value="Q_MOTIF"/>
    <property type="match status" value="1"/>
</dbReference>
<organism>
    <name type="scientific">Meyerozyma guilliermondii (strain ATCC 6260 / CBS 566 / DSM 6381 / JCM 1539 / NBRC 10279 / NRRL Y-324)</name>
    <name type="common">Yeast</name>
    <name type="synonym">Candida guilliermondii</name>
    <dbReference type="NCBI Taxonomy" id="294746"/>
    <lineage>
        <taxon>Eukaryota</taxon>
        <taxon>Fungi</taxon>
        <taxon>Dikarya</taxon>
        <taxon>Ascomycota</taxon>
        <taxon>Saccharomycotina</taxon>
        <taxon>Pichiomycetes</taxon>
        <taxon>Debaryomycetaceae</taxon>
        <taxon>Meyerozyma</taxon>
    </lineage>
</organism>
<gene>
    <name type="primary">DBP9</name>
    <name type="ORF">PGUG_00890</name>
</gene>
<evidence type="ECO:0000250" key="1"/>
<evidence type="ECO:0000255" key="2">
    <source>
        <dbReference type="PROSITE-ProRule" id="PRU00541"/>
    </source>
</evidence>
<evidence type="ECO:0000255" key="3">
    <source>
        <dbReference type="PROSITE-ProRule" id="PRU00542"/>
    </source>
</evidence>
<evidence type="ECO:0000256" key="4">
    <source>
        <dbReference type="SAM" id="MobiDB-lite"/>
    </source>
</evidence>
<evidence type="ECO:0000305" key="5"/>
<proteinExistence type="inferred from homology"/>
<sequence length="586" mass="66599">MQYHLQVEPHRCAHRTFPSPMTDAVVASEYLDESAKWENFKLDPRLLQAVYQLGFEKPTLIQSNAIPLSLEDKRDIIAKASTGSGKTGAYSIPIIQNILSEGLSEHNIKSVILVPTKELANQVTKFIEKLLVYCNSITQINLATNVSDQVVVSLLSAKPEIIISTPSRLTTVLEKHASIVDLTTVTSLAIDEVDLMLSYGYMEDLQKLDDFLPIKRNLQTYLMSATVNDDVNDLKARFCTKPAIIKLNDNEENQNRLVQFYARTSEFDKFLFAYVIFKLHLIKGKTLAFVNNIDRGYRLKLFLEQFGVRCCILNSELPVNSRLHIVDEFNKNVYNLLIASDESTEVTEQEGEDDQEDSKPEKSKKKKGKKVDGEYGVSRGVDFRNVACVLNFDLPTTSRSYVHRVGRTARAGKAGMALSFVVPVKEVGKHKTATNPGAKRDEKVLARIVKSQSKNGFEIKPYQFDMTQVEGFRYRAEDAFRAVTSAAIREARIRELKNEIMNSEKLKRFFEENPQDLASLRHDKELHPAKVQSQLKRVPDYLLPESARQDPKKIGFVPFHKNKVHKNRKRKGGKKVDALKSFRQKK</sequence>
<protein>
    <recommendedName>
        <fullName>ATP-dependent RNA helicase DBP9</fullName>
        <ecNumber>3.6.4.13</ecNumber>
    </recommendedName>
</protein>
<comment type="function">
    <text evidence="1">ATP-binding RNA helicase involved in the biogenesis of 60S ribosomal subunits and is required for the normal formation of 25S and 5.8S rRNAs.</text>
</comment>
<comment type="catalytic activity">
    <reaction>
        <text>ATP + H2O = ADP + phosphate + H(+)</text>
        <dbReference type="Rhea" id="RHEA:13065"/>
        <dbReference type="ChEBI" id="CHEBI:15377"/>
        <dbReference type="ChEBI" id="CHEBI:15378"/>
        <dbReference type="ChEBI" id="CHEBI:30616"/>
        <dbReference type="ChEBI" id="CHEBI:43474"/>
        <dbReference type="ChEBI" id="CHEBI:456216"/>
        <dbReference type="EC" id="3.6.4.13"/>
    </reaction>
</comment>
<comment type="subcellular location">
    <subcellularLocation>
        <location evidence="1">Nucleus</location>
        <location evidence="1">Nucleolus</location>
    </subcellularLocation>
</comment>
<comment type="domain">
    <text>The Q motif is unique to and characteristic of the DEAD box family of RNA helicases and controls ATP binding and hydrolysis.</text>
</comment>
<comment type="similarity">
    <text evidence="5">Belongs to the DEAD box helicase family. DDX56/DBP9 subfamily.</text>
</comment>
<reference key="1">
    <citation type="journal article" date="2009" name="Nature">
        <title>Evolution of pathogenicity and sexual reproduction in eight Candida genomes.</title>
        <authorList>
            <person name="Butler G."/>
            <person name="Rasmussen M.D."/>
            <person name="Lin M.F."/>
            <person name="Santos M.A.S."/>
            <person name="Sakthikumar S."/>
            <person name="Munro C.A."/>
            <person name="Rheinbay E."/>
            <person name="Grabherr M."/>
            <person name="Forche A."/>
            <person name="Reedy J.L."/>
            <person name="Agrafioti I."/>
            <person name="Arnaud M.B."/>
            <person name="Bates S."/>
            <person name="Brown A.J.P."/>
            <person name="Brunke S."/>
            <person name="Costanzo M.C."/>
            <person name="Fitzpatrick D.A."/>
            <person name="de Groot P.W.J."/>
            <person name="Harris D."/>
            <person name="Hoyer L.L."/>
            <person name="Hube B."/>
            <person name="Klis F.M."/>
            <person name="Kodira C."/>
            <person name="Lennard N."/>
            <person name="Logue M.E."/>
            <person name="Martin R."/>
            <person name="Neiman A.M."/>
            <person name="Nikolaou E."/>
            <person name="Quail M.A."/>
            <person name="Quinn J."/>
            <person name="Santos M.C."/>
            <person name="Schmitzberger F.F."/>
            <person name="Sherlock G."/>
            <person name="Shah P."/>
            <person name="Silverstein K.A.T."/>
            <person name="Skrzypek M.S."/>
            <person name="Soll D."/>
            <person name="Staggs R."/>
            <person name="Stansfield I."/>
            <person name="Stumpf M.P.H."/>
            <person name="Sudbery P.E."/>
            <person name="Srikantha T."/>
            <person name="Zeng Q."/>
            <person name="Berman J."/>
            <person name="Berriman M."/>
            <person name="Heitman J."/>
            <person name="Gow N.A.R."/>
            <person name="Lorenz M.C."/>
            <person name="Birren B.W."/>
            <person name="Kellis M."/>
            <person name="Cuomo C.A."/>
        </authorList>
    </citation>
    <scope>NUCLEOTIDE SEQUENCE [LARGE SCALE GENOMIC DNA]</scope>
    <source>
        <strain>ATCC 6260 / CBS 566 / DSM 6381 / JCM 1539 / NBRC 10279 / NRRL Y-324</strain>
    </source>
</reference>